<sequence length="225" mass="25671">MKLVVSVMPKSLEEAQEIDVSRYEEADIIEWRADFLAKDDILNVAPAIFEKFAGRELIFTLRTRQEGGEIELSDDEYVALIKEVAGFYQPDYIDFEYFSHKGKFEEMLEFPNLVLSYHNFEETPENMMEILSELTSLTPKVVKVSVMAHNEQDVLDLMNYTRGFKTLNPEQDFVTISMGKVGRISRIAADLTGSSWSFASQDMASAPGQISLSNMKKIQEILNEN</sequence>
<proteinExistence type="inferred from homology"/>
<protein>
    <recommendedName>
        <fullName evidence="1">3-dehydroquinate dehydratase</fullName>
        <shortName evidence="1">3-dehydroquinase</shortName>
        <ecNumber evidence="1">4.2.1.10</ecNumber>
    </recommendedName>
    <alternativeName>
        <fullName evidence="1">Type I DHQase</fullName>
    </alternativeName>
    <alternativeName>
        <fullName evidence="1">Type I dehydroquinase</fullName>
        <shortName evidence="1">DHQ1</shortName>
    </alternativeName>
</protein>
<dbReference type="EC" id="4.2.1.10" evidence="1"/>
<dbReference type="EMBL" id="CP000387">
    <property type="protein sequence ID" value="ABN44864.1"/>
    <property type="molecule type" value="Genomic_DNA"/>
</dbReference>
<dbReference type="RefSeq" id="WP_002920826.1">
    <property type="nucleotide sequence ID" value="NC_009009.1"/>
</dbReference>
<dbReference type="RefSeq" id="YP_001035414.1">
    <property type="nucleotide sequence ID" value="NC_009009.1"/>
</dbReference>
<dbReference type="SMR" id="A3CNV9"/>
<dbReference type="STRING" id="388919.SSA_1470"/>
<dbReference type="KEGG" id="ssa:SSA_1470"/>
<dbReference type="PATRIC" id="fig|388919.9.peg.1395"/>
<dbReference type="eggNOG" id="COG0710">
    <property type="taxonomic scope" value="Bacteria"/>
</dbReference>
<dbReference type="HOGENOM" id="CLU_064444_0_0_9"/>
<dbReference type="OrthoDB" id="9813659at2"/>
<dbReference type="UniPathway" id="UPA00053">
    <property type="reaction ID" value="UER00086"/>
</dbReference>
<dbReference type="Proteomes" id="UP000002148">
    <property type="component" value="Chromosome"/>
</dbReference>
<dbReference type="GO" id="GO:0003855">
    <property type="term" value="F:3-dehydroquinate dehydratase activity"/>
    <property type="evidence" value="ECO:0007669"/>
    <property type="project" value="UniProtKB-UniRule"/>
</dbReference>
<dbReference type="GO" id="GO:0046279">
    <property type="term" value="P:3,4-dihydroxybenzoate biosynthetic process"/>
    <property type="evidence" value="ECO:0007669"/>
    <property type="project" value="TreeGrafter"/>
</dbReference>
<dbReference type="GO" id="GO:0008652">
    <property type="term" value="P:amino acid biosynthetic process"/>
    <property type="evidence" value="ECO:0007669"/>
    <property type="project" value="UniProtKB-KW"/>
</dbReference>
<dbReference type="GO" id="GO:0009073">
    <property type="term" value="P:aromatic amino acid family biosynthetic process"/>
    <property type="evidence" value="ECO:0007669"/>
    <property type="project" value="UniProtKB-KW"/>
</dbReference>
<dbReference type="GO" id="GO:0009423">
    <property type="term" value="P:chorismate biosynthetic process"/>
    <property type="evidence" value="ECO:0007669"/>
    <property type="project" value="UniProtKB-UniRule"/>
</dbReference>
<dbReference type="CDD" id="cd00502">
    <property type="entry name" value="DHQase_I"/>
    <property type="match status" value="1"/>
</dbReference>
<dbReference type="FunFam" id="3.20.20.70:FF:000047">
    <property type="entry name" value="3-dehydroquinate dehydratase"/>
    <property type="match status" value="1"/>
</dbReference>
<dbReference type="Gene3D" id="3.20.20.70">
    <property type="entry name" value="Aldolase class I"/>
    <property type="match status" value="1"/>
</dbReference>
<dbReference type="HAMAP" id="MF_00214">
    <property type="entry name" value="AroD"/>
    <property type="match status" value="1"/>
</dbReference>
<dbReference type="InterPro" id="IPR013785">
    <property type="entry name" value="Aldolase_TIM"/>
</dbReference>
<dbReference type="InterPro" id="IPR001381">
    <property type="entry name" value="DHquinase_I"/>
</dbReference>
<dbReference type="InterPro" id="IPR050146">
    <property type="entry name" value="Type-I_3-dehydroquinase"/>
</dbReference>
<dbReference type="NCBIfam" id="TIGR01093">
    <property type="entry name" value="aroD"/>
    <property type="match status" value="1"/>
</dbReference>
<dbReference type="PANTHER" id="PTHR43699">
    <property type="entry name" value="3-DEHYDROQUINATE DEHYDRATASE"/>
    <property type="match status" value="1"/>
</dbReference>
<dbReference type="PANTHER" id="PTHR43699:SF1">
    <property type="entry name" value="3-DEHYDROQUINATE DEHYDRATASE"/>
    <property type="match status" value="1"/>
</dbReference>
<dbReference type="Pfam" id="PF01487">
    <property type="entry name" value="DHquinase_I"/>
    <property type="match status" value="1"/>
</dbReference>
<dbReference type="SUPFAM" id="SSF51569">
    <property type="entry name" value="Aldolase"/>
    <property type="match status" value="1"/>
</dbReference>
<organism>
    <name type="scientific">Streptococcus sanguinis (strain SK36)</name>
    <dbReference type="NCBI Taxonomy" id="388919"/>
    <lineage>
        <taxon>Bacteria</taxon>
        <taxon>Bacillati</taxon>
        <taxon>Bacillota</taxon>
        <taxon>Bacilli</taxon>
        <taxon>Lactobacillales</taxon>
        <taxon>Streptococcaceae</taxon>
        <taxon>Streptococcus</taxon>
    </lineage>
</organism>
<evidence type="ECO:0000255" key="1">
    <source>
        <dbReference type="HAMAP-Rule" id="MF_00214"/>
    </source>
</evidence>
<name>AROD_STRSV</name>
<reference key="1">
    <citation type="journal article" date="2007" name="J. Bacteriol.">
        <title>Genome of the opportunistic pathogen Streptococcus sanguinis.</title>
        <authorList>
            <person name="Xu P."/>
            <person name="Alves J.M."/>
            <person name="Kitten T."/>
            <person name="Brown A."/>
            <person name="Chen Z."/>
            <person name="Ozaki L.S."/>
            <person name="Manque P."/>
            <person name="Ge X."/>
            <person name="Serrano M.G."/>
            <person name="Puiu D."/>
            <person name="Hendricks S."/>
            <person name="Wang Y."/>
            <person name="Chaplin M.D."/>
            <person name="Akan D."/>
            <person name="Paik S."/>
            <person name="Peterson D.L."/>
            <person name="Macrina F.L."/>
            <person name="Buck G.A."/>
        </authorList>
    </citation>
    <scope>NUCLEOTIDE SEQUENCE [LARGE SCALE GENOMIC DNA]</scope>
    <source>
        <strain>SK36</strain>
    </source>
</reference>
<comment type="function">
    <text evidence="1">Involved in the third step of the chorismate pathway, which leads to the biosynthesis of aromatic amino acids. Catalyzes the cis-dehydration of 3-dehydroquinate (DHQ) and introduces the first double bond of the aromatic ring to yield 3-dehydroshikimate.</text>
</comment>
<comment type="catalytic activity">
    <reaction evidence="1">
        <text>3-dehydroquinate = 3-dehydroshikimate + H2O</text>
        <dbReference type="Rhea" id="RHEA:21096"/>
        <dbReference type="ChEBI" id="CHEBI:15377"/>
        <dbReference type="ChEBI" id="CHEBI:16630"/>
        <dbReference type="ChEBI" id="CHEBI:32364"/>
        <dbReference type="EC" id="4.2.1.10"/>
    </reaction>
</comment>
<comment type="pathway">
    <text evidence="1">Metabolic intermediate biosynthesis; chorismate biosynthesis; chorismate from D-erythrose 4-phosphate and phosphoenolpyruvate: step 3/7.</text>
</comment>
<comment type="subunit">
    <text evidence="1">Homodimer.</text>
</comment>
<comment type="similarity">
    <text evidence="1">Belongs to the type-I 3-dehydroquinase family.</text>
</comment>
<keyword id="KW-0028">Amino-acid biosynthesis</keyword>
<keyword id="KW-0057">Aromatic amino acid biosynthesis</keyword>
<keyword id="KW-0456">Lyase</keyword>
<keyword id="KW-1185">Reference proteome</keyword>
<keyword id="KW-0704">Schiff base</keyword>
<accession>A3CNV9</accession>
<feature type="chain" id="PRO_1000043203" description="3-dehydroquinate dehydratase">
    <location>
        <begin position="1"/>
        <end position="225"/>
    </location>
</feature>
<feature type="active site" description="Proton donor/acceptor" evidence="1">
    <location>
        <position position="118"/>
    </location>
</feature>
<feature type="active site" description="Schiff-base intermediate with substrate" evidence="1">
    <location>
        <position position="143"/>
    </location>
</feature>
<feature type="binding site" evidence="1">
    <location>
        <position position="6"/>
    </location>
    <ligand>
        <name>3-dehydroquinate</name>
        <dbReference type="ChEBI" id="CHEBI:32364"/>
    </ligand>
</feature>
<feature type="binding site" evidence="1">
    <location>
        <begin position="30"/>
        <end position="32"/>
    </location>
    <ligand>
        <name>3-dehydroquinate</name>
        <dbReference type="ChEBI" id="CHEBI:32364"/>
    </ligand>
</feature>
<feature type="binding site" evidence="1">
    <location>
        <position position="62"/>
    </location>
    <ligand>
        <name>3-dehydroquinate</name>
        <dbReference type="ChEBI" id="CHEBI:32364"/>
    </ligand>
</feature>
<feature type="binding site" evidence="1">
    <location>
        <position position="186"/>
    </location>
    <ligand>
        <name>3-dehydroquinate</name>
        <dbReference type="ChEBI" id="CHEBI:32364"/>
    </ligand>
</feature>
<feature type="binding site" evidence="1">
    <location>
        <position position="205"/>
    </location>
    <ligand>
        <name>3-dehydroquinate</name>
        <dbReference type="ChEBI" id="CHEBI:32364"/>
    </ligand>
</feature>
<feature type="binding site" evidence="1">
    <location>
        <position position="209"/>
    </location>
    <ligand>
        <name>3-dehydroquinate</name>
        <dbReference type="ChEBI" id="CHEBI:32364"/>
    </ligand>
</feature>
<gene>
    <name evidence="1" type="primary">aroD</name>
    <name type="ordered locus">SSA_1470</name>
</gene>